<accession>Q12R04</accession>
<organism>
    <name type="scientific">Shewanella denitrificans (strain OS217 / ATCC BAA-1090 / DSM 15013)</name>
    <dbReference type="NCBI Taxonomy" id="318161"/>
    <lineage>
        <taxon>Bacteria</taxon>
        <taxon>Pseudomonadati</taxon>
        <taxon>Pseudomonadota</taxon>
        <taxon>Gammaproteobacteria</taxon>
        <taxon>Alteromonadales</taxon>
        <taxon>Shewanellaceae</taxon>
        <taxon>Shewanella</taxon>
    </lineage>
</organism>
<name>GCST_SHEDO</name>
<protein>
    <recommendedName>
        <fullName evidence="1">Aminomethyltransferase</fullName>
        <ecNumber evidence="1">2.1.2.10</ecNumber>
    </recommendedName>
    <alternativeName>
        <fullName evidence="1">Glycine cleavage system T protein</fullName>
    </alternativeName>
</protein>
<keyword id="KW-0032">Aminotransferase</keyword>
<keyword id="KW-1185">Reference proteome</keyword>
<keyword id="KW-0808">Transferase</keyword>
<gene>
    <name evidence="1" type="primary">gcvT</name>
    <name type="ordered locus">Sden_0833</name>
</gene>
<feature type="chain" id="PRO_1000047700" description="Aminomethyltransferase">
    <location>
        <begin position="1"/>
        <end position="364"/>
    </location>
</feature>
<evidence type="ECO:0000255" key="1">
    <source>
        <dbReference type="HAMAP-Rule" id="MF_00259"/>
    </source>
</evidence>
<comment type="function">
    <text evidence="1">The glycine cleavage system catalyzes the degradation of glycine.</text>
</comment>
<comment type="catalytic activity">
    <reaction evidence="1">
        <text>N(6)-[(R)-S(8)-aminomethyldihydrolipoyl]-L-lysyl-[protein] + (6S)-5,6,7,8-tetrahydrofolate = N(6)-[(R)-dihydrolipoyl]-L-lysyl-[protein] + (6R)-5,10-methylene-5,6,7,8-tetrahydrofolate + NH4(+)</text>
        <dbReference type="Rhea" id="RHEA:16945"/>
        <dbReference type="Rhea" id="RHEA-COMP:10475"/>
        <dbReference type="Rhea" id="RHEA-COMP:10492"/>
        <dbReference type="ChEBI" id="CHEBI:15636"/>
        <dbReference type="ChEBI" id="CHEBI:28938"/>
        <dbReference type="ChEBI" id="CHEBI:57453"/>
        <dbReference type="ChEBI" id="CHEBI:83100"/>
        <dbReference type="ChEBI" id="CHEBI:83143"/>
        <dbReference type="EC" id="2.1.2.10"/>
    </reaction>
</comment>
<comment type="subunit">
    <text evidence="1">The glycine cleavage system is composed of four proteins: P, T, L and H.</text>
</comment>
<comment type="similarity">
    <text evidence="1">Belongs to the GcvT family.</text>
</comment>
<proteinExistence type="inferred from homology"/>
<reference key="1">
    <citation type="submission" date="2006-03" db="EMBL/GenBank/DDBJ databases">
        <title>Complete sequence of Shewanella denitrificans OS217.</title>
        <authorList>
            <consortium name="US DOE Joint Genome Institute"/>
            <person name="Copeland A."/>
            <person name="Lucas S."/>
            <person name="Lapidus A."/>
            <person name="Barry K."/>
            <person name="Detter J.C."/>
            <person name="Glavina del Rio T."/>
            <person name="Hammon N."/>
            <person name="Israni S."/>
            <person name="Dalin E."/>
            <person name="Tice H."/>
            <person name="Pitluck S."/>
            <person name="Brettin T."/>
            <person name="Bruce D."/>
            <person name="Han C."/>
            <person name="Tapia R."/>
            <person name="Gilna P."/>
            <person name="Kiss H."/>
            <person name="Schmutz J."/>
            <person name="Larimer F."/>
            <person name="Land M."/>
            <person name="Hauser L."/>
            <person name="Kyrpides N."/>
            <person name="Lykidis A."/>
            <person name="Richardson P."/>
        </authorList>
    </citation>
    <scope>NUCLEOTIDE SEQUENCE [LARGE SCALE GENOMIC DNA]</scope>
    <source>
        <strain>OS217 / ATCC BAA-1090 / DSM 15013</strain>
    </source>
</reference>
<dbReference type="EC" id="2.1.2.10" evidence="1"/>
<dbReference type="EMBL" id="CP000302">
    <property type="protein sequence ID" value="ABE54122.1"/>
    <property type="molecule type" value="Genomic_DNA"/>
</dbReference>
<dbReference type="RefSeq" id="WP_011495287.1">
    <property type="nucleotide sequence ID" value="NC_007954.1"/>
</dbReference>
<dbReference type="SMR" id="Q12R04"/>
<dbReference type="STRING" id="318161.Sden_0833"/>
<dbReference type="KEGG" id="sdn:Sden_0833"/>
<dbReference type="eggNOG" id="COG0404">
    <property type="taxonomic scope" value="Bacteria"/>
</dbReference>
<dbReference type="HOGENOM" id="CLU_007884_10_2_6"/>
<dbReference type="OrthoDB" id="9774591at2"/>
<dbReference type="Proteomes" id="UP000001982">
    <property type="component" value="Chromosome"/>
</dbReference>
<dbReference type="GO" id="GO:0005829">
    <property type="term" value="C:cytosol"/>
    <property type="evidence" value="ECO:0007669"/>
    <property type="project" value="TreeGrafter"/>
</dbReference>
<dbReference type="GO" id="GO:0005960">
    <property type="term" value="C:glycine cleavage complex"/>
    <property type="evidence" value="ECO:0007669"/>
    <property type="project" value="InterPro"/>
</dbReference>
<dbReference type="GO" id="GO:0004047">
    <property type="term" value="F:aminomethyltransferase activity"/>
    <property type="evidence" value="ECO:0007669"/>
    <property type="project" value="UniProtKB-UniRule"/>
</dbReference>
<dbReference type="GO" id="GO:0008483">
    <property type="term" value="F:transaminase activity"/>
    <property type="evidence" value="ECO:0007669"/>
    <property type="project" value="UniProtKB-KW"/>
</dbReference>
<dbReference type="GO" id="GO:0019464">
    <property type="term" value="P:glycine decarboxylation via glycine cleavage system"/>
    <property type="evidence" value="ECO:0007669"/>
    <property type="project" value="UniProtKB-UniRule"/>
</dbReference>
<dbReference type="FunFam" id="2.40.30.110:FF:000001">
    <property type="entry name" value="Aminomethyltransferase"/>
    <property type="match status" value="1"/>
</dbReference>
<dbReference type="FunFam" id="3.30.70.1400:FF:000001">
    <property type="entry name" value="Aminomethyltransferase"/>
    <property type="match status" value="1"/>
</dbReference>
<dbReference type="FunFam" id="4.10.1250.10:FF:000001">
    <property type="entry name" value="Aminomethyltransferase"/>
    <property type="match status" value="1"/>
</dbReference>
<dbReference type="Gene3D" id="2.40.30.110">
    <property type="entry name" value="Aminomethyltransferase beta-barrel domains"/>
    <property type="match status" value="1"/>
</dbReference>
<dbReference type="Gene3D" id="3.30.70.1400">
    <property type="entry name" value="Aminomethyltransferase beta-barrel domains"/>
    <property type="match status" value="1"/>
</dbReference>
<dbReference type="Gene3D" id="4.10.1250.10">
    <property type="entry name" value="Aminomethyltransferase fragment"/>
    <property type="match status" value="1"/>
</dbReference>
<dbReference type="Gene3D" id="3.30.1360.120">
    <property type="entry name" value="Probable tRNA modification gtpase trme, domain 1"/>
    <property type="match status" value="1"/>
</dbReference>
<dbReference type="HAMAP" id="MF_00259">
    <property type="entry name" value="GcvT"/>
    <property type="match status" value="1"/>
</dbReference>
<dbReference type="InterPro" id="IPR006223">
    <property type="entry name" value="GCS_T"/>
</dbReference>
<dbReference type="InterPro" id="IPR022903">
    <property type="entry name" value="GCS_T_bac"/>
</dbReference>
<dbReference type="InterPro" id="IPR013977">
    <property type="entry name" value="GCST_C"/>
</dbReference>
<dbReference type="InterPro" id="IPR006222">
    <property type="entry name" value="GCV_T_N"/>
</dbReference>
<dbReference type="InterPro" id="IPR028896">
    <property type="entry name" value="GcvT/YgfZ/DmdA"/>
</dbReference>
<dbReference type="InterPro" id="IPR029043">
    <property type="entry name" value="GcvT/YgfZ_C"/>
</dbReference>
<dbReference type="InterPro" id="IPR027266">
    <property type="entry name" value="TrmE/GcvT_dom1"/>
</dbReference>
<dbReference type="NCBIfam" id="TIGR00528">
    <property type="entry name" value="gcvT"/>
    <property type="match status" value="1"/>
</dbReference>
<dbReference type="NCBIfam" id="NF001567">
    <property type="entry name" value="PRK00389.1"/>
    <property type="match status" value="1"/>
</dbReference>
<dbReference type="PANTHER" id="PTHR43757">
    <property type="entry name" value="AMINOMETHYLTRANSFERASE"/>
    <property type="match status" value="1"/>
</dbReference>
<dbReference type="PANTHER" id="PTHR43757:SF2">
    <property type="entry name" value="AMINOMETHYLTRANSFERASE, MITOCHONDRIAL"/>
    <property type="match status" value="1"/>
</dbReference>
<dbReference type="Pfam" id="PF01571">
    <property type="entry name" value="GCV_T"/>
    <property type="match status" value="1"/>
</dbReference>
<dbReference type="Pfam" id="PF08669">
    <property type="entry name" value="GCV_T_C"/>
    <property type="match status" value="1"/>
</dbReference>
<dbReference type="PIRSF" id="PIRSF006487">
    <property type="entry name" value="GcvT"/>
    <property type="match status" value="1"/>
</dbReference>
<dbReference type="SUPFAM" id="SSF101790">
    <property type="entry name" value="Aminomethyltransferase beta-barrel domain"/>
    <property type="match status" value="1"/>
</dbReference>
<dbReference type="SUPFAM" id="SSF103025">
    <property type="entry name" value="Folate-binding domain"/>
    <property type="match status" value="1"/>
</dbReference>
<sequence>MANKTVLFHKHLESNAKMVDFHGWDMPLNYGSQIEEHHAVRQDAGMFDVSHMTVVDVTGQDARDFLRKLLANDVAKLTVPGKALYGGMLDDNAGVIDDLITYYLSDTHYRVVVNSATREKDLAWIAKQSAPFSVTITERPELAMIAVQGPNAKAKAATVFTPEQNSAVEGMKPFFGLQSGSLFIATTGYTGEAGYEIIVPEQDAEDLWQALLNTGVKPCGLGARDTLRLEAGMNLYGLDMDESINPLAANMGWTIAWEPSDRDFIGRAALTELKAQGTEKLVGLVMEEKGVLRHDMPVFFTDSDGVEQQGYITSGTFSPTLGYSIAMARVPAGIGAIAEVEMRKKRVAVKVIAPSFVRNGKQAF</sequence>